<organism>
    <name type="scientific">Homo sapiens</name>
    <name type="common">Human</name>
    <dbReference type="NCBI Taxonomy" id="9606"/>
    <lineage>
        <taxon>Eukaryota</taxon>
        <taxon>Metazoa</taxon>
        <taxon>Chordata</taxon>
        <taxon>Craniata</taxon>
        <taxon>Vertebrata</taxon>
        <taxon>Euteleostomi</taxon>
        <taxon>Mammalia</taxon>
        <taxon>Eutheria</taxon>
        <taxon>Euarchontoglires</taxon>
        <taxon>Primates</taxon>
        <taxon>Haplorrhini</taxon>
        <taxon>Catarrhini</taxon>
        <taxon>Hominidae</taxon>
        <taxon>Homo</taxon>
    </lineage>
</organism>
<proteinExistence type="evidence at protein level"/>
<name>ANTR2_HUMAN</name>
<evidence type="ECO:0000255" key="1"/>
<evidence type="ECO:0000255" key="2">
    <source>
        <dbReference type="PROSITE-ProRule" id="PRU00219"/>
    </source>
</evidence>
<evidence type="ECO:0000256" key="3">
    <source>
        <dbReference type="SAM" id="MobiDB-lite"/>
    </source>
</evidence>
<evidence type="ECO:0000269" key="4">
    <source>
    </source>
</evidence>
<evidence type="ECO:0000269" key="5">
    <source>
    </source>
</evidence>
<evidence type="ECO:0000269" key="6">
    <source>
    </source>
</evidence>
<evidence type="ECO:0000269" key="7">
    <source>
    </source>
</evidence>
<evidence type="ECO:0000269" key="8">
    <source>
    </source>
</evidence>
<evidence type="ECO:0000269" key="9">
    <source>
    </source>
</evidence>
<evidence type="ECO:0000269" key="10">
    <source>
    </source>
</evidence>
<evidence type="ECO:0000269" key="11">
    <source>
    </source>
</evidence>
<evidence type="ECO:0000269" key="12">
    <source>
    </source>
</evidence>
<evidence type="ECO:0000269" key="13">
    <source>
    </source>
</evidence>
<evidence type="ECO:0000269" key="14">
    <source>
    </source>
</evidence>
<evidence type="ECO:0000269" key="15">
    <source ref="4"/>
</evidence>
<evidence type="ECO:0000303" key="16">
    <source>
    </source>
</evidence>
<evidence type="ECO:0000303" key="17">
    <source>
    </source>
</evidence>
<evidence type="ECO:0000303" key="18">
    <source>
    </source>
</evidence>
<evidence type="ECO:0000303" key="19">
    <source>
    </source>
</evidence>
<evidence type="ECO:0000303" key="20">
    <source ref="4"/>
</evidence>
<evidence type="ECO:0000305" key="21"/>
<evidence type="ECO:0000312" key="22">
    <source>
        <dbReference type="HGNC" id="HGNC:21732"/>
    </source>
</evidence>
<evidence type="ECO:0007744" key="23">
    <source>
        <dbReference type="PDB" id="1SHT"/>
    </source>
</evidence>
<evidence type="ECO:0007744" key="24">
    <source>
        <dbReference type="PDB" id="1SHU"/>
    </source>
</evidence>
<evidence type="ECO:0007744" key="25">
    <source>
        <dbReference type="PDB" id="1T6B"/>
    </source>
</evidence>
<evidence type="ECO:0007744" key="26">
    <source>
    </source>
</evidence>
<evidence type="ECO:0007829" key="27">
    <source>
        <dbReference type="PDB" id="1SHU"/>
    </source>
</evidence>
<keyword id="KW-0002">3D-structure</keyword>
<keyword id="KW-0025">Alternative splicing</keyword>
<keyword id="KW-1003">Cell membrane</keyword>
<keyword id="KW-0225">Disease variant</keyword>
<keyword id="KW-1015">Disulfide bond</keyword>
<keyword id="KW-0256">Endoplasmic reticulum</keyword>
<keyword id="KW-0325">Glycoprotein</keyword>
<keyword id="KW-0472">Membrane</keyword>
<keyword id="KW-0479">Metal-binding</keyword>
<keyword id="KW-0597">Phosphoprotein</keyword>
<keyword id="KW-1267">Proteomics identification</keyword>
<keyword id="KW-0675">Receptor</keyword>
<keyword id="KW-1185">Reference proteome</keyword>
<keyword id="KW-0964">Secreted</keyword>
<keyword id="KW-0732">Signal</keyword>
<keyword id="KW-0812">Transmembrane</keyword>
<keyword id="KW-1133">Transmembrane helix</keyword>
<accession>P58335</accession>
<accession>Q4W5H6</accession>
<accession>Q59E98</accession>
<accession>Q5JPE9</accession>
<accession>Q86UI1</accession>
<accession>Q8N4J8</accession>
<accession>Q8NB13</accession>
<accession>Q96NC7</accession>
<comment type="function">
    <text evidence="4 7">Necessary for cellular interactions with laminin and the extracellular matrix.</text>
</comment>
<comment type="function">
    <text evidence="5 6 10 11 12">(Microbial infection) Receptor for the protective antigen (PA) of B.anthracis (PubMed:12700348, PubMed:15243628, PubMed:15326297). Binding of PA leads to heptamerization of the receptor-PA complex (PubMed:12700348, PubMed:15243628, PubMed:15326297). Upon binding of the PA of B.anthracis, the complex moves to glycosphingolipid-rich lipid rafts, where it is internalized via a clathrin-dependent pathway (PubMed:12551953, PubMed:15337774). In the endosomal membrane, at pH under 7, the complex then rearranges and forms a pore allowing the other components of anthrax toxin to escape to the cytoplasm (PubMed:12551953, PubMed:15337774).</text>
</comment>
<comment type="subunit">
    <text evidence="4">Binds laminin, and possibly also collagen type IV.</text>
</comment>
<comment type="subunit">
    <text evidence="5 6 10 11 12">(Microbial infection) Interacts (via VWFA domain) with the protective antigen (PA) of B.anthracis.</text>
</comment>
<comment type="interaction">
    <interactant intactId="EBI-456840">
        <id>P58335</id>
    </interactant>
    <interactant intactId="EBI-456868">
        <id>P13423</id>
        <label>pagA</label>
    </interactant>
    <organismsDiffer>true</organismsDiffer>
    <experiments>7</experiments>
</comment>
<comment type="subcellular location">
    <molecule>Isoform 1</molecule>
    <subcellularLocation>
        <location evidence="6">Cell membrane</location>
        <topology evidence="1">Single-pass type I membrane protein</topology>
    </subcellularLocation>
    <text evidence="6">Expressed at the cell surface.</text>
</comment>
<comment type="subcellular location">
    <molecule>Isoform 2</molecule>
    <subcellularLocation>
        <location evidence="4">Endoplasmic reticulum membrane</location>
        <topology evidence="1">Single-pass type I membrane protein</topology>
    </subcellularLocation>
    <text evidence="4">Expressed predominantly within the endoplasmic reticulum and not at the plasma membrane.</text>
</comment>
<comment type="subcellular location">
    <molecule>Isoform 3</molecule>
    <subcellularLocation>
        <location evidence="21">Secreted</location>
    </subcellularLocation>
</comment>
<comment type="alternative products">
    <event type="alternative splicing"/>
    <isoform>
        <id>P58335-1</id>
        <name>1</name>
        <sequence type="displayed"/>
    </isoform>
    <isoform>
        <id>P58335-2</id>
        <name>2</name>
        <sequence type="described" ref="VSP_008343"/>
    </isoform>
    <isoform>
        <id>P58335-3</id>
        <name>3</name>
        <sequence type="described" ref="VSP_008344 VSP_008345"/>
    </isoform>
    <isoform>
        <id>P58335-4</id>
        <name>4</name>
        <sequence type="described" ref="VSP_008346"/>
    </isoform>
</comment>
<comment type="tissue specificity">
    <text evidence="8">Expressed in prostate, thymus, ovary, testis, pancreas, colon, heart, kidney, lung, liver, peripheral blood leukocytes, placenta, skeletal muscle, small intestine and spleen.</text>
</comment>
<comment type="disease" evidence="7 8 14">
    <disease id="DI-01850">
        <name>Hyaline fibromatosis syndrome</name>
        <acronym>HFS</acronym>
        <description>An autosomal recessive syndrome characterized by abnormal growth of hyalinized fibrous tissue usually affecting subcutaneous regions on the scalp, ears, neck, face, hands, and feet. The lesions appear as pearly papules or fleshy nodules. Additional features include gingival hypertrophy, progressive joint contractures resulting in severe limitation of mobility, osteopenia, and osteoporosis. Disease severity is variable. Some individuals manifest symptoms in infancy and have additional visceral or systemic involvement. Hyaline deposits in multiple organs, recurrent infections and intractable diarrhea often lead to early death. Surviving children may suffer from severely reduced mobility due to joint contractures. Other patients have later onset of a milder disorder affecting only the face and digits.</description>
        <dbReference type="MIM" id="228600"/>
    </disease>
    <text>The disease is caused by variants affecting the gene represented in this entry.</text>
</comment>
<comment type="miscellaneous">
    <molecule>Isoform 3</molecule>
    <text evidence="21">May be produced at very low levels due to a premature stop codon in the mRNA, leading to nonsense-mediated mRNA decay.</text>
</comment>
<comment type="similarity">
    <text evidence="21">Belongs to the ATR family.</text>
</comment>
<comment type="sequence caution" evidence="21">
    <conflict type="erroneous gene model prediction">
        <sequence resource="EMBL-CDS" id="AAY40907"/>
    </conflict>
</comment>
<comment type="sequence caution" evidence="21">
    <conflict type="erroneous initiation">
        <sequence resource="EMBL-CDS" id="BAB70976"/>
    </conflict>
    <text>Truncated N-terminus.</text>
</comment>
<comment type="sequence caution" evidence="21">
    <conflict type="erroneous initiation">
        <sequence resource="EMBL-CDS" id="BAD93150"/>
    </conflict>
    <text>Extended N-terminus.</text>
</comment>
<gene>
    <name evidence="22" type="primary">ANTXR2</name>
    <name evidence="16" type="synonym">CMG2</name>
</gene>
<reference key="1">
    <citation type="journal article" date="2001" name="J. Cell Sci.">
        <title>Differential gene expression during capillary morphogenesis in 3D collagen matrices: regulated expression of genes involved in basement membrane matrix assembly, cell cycle progression, cellular differentiation and G-protein signaling.</title>
        <authorList>
            <person name="Bell S.E."/>
            <person name="Mavila A."/>
            <person name="Salazar R."/>
            <person name="Bayless K.J."/>
            <person name="Kanagala S."/>
            <person name="Maxwell S.A."/>
            <person name="Davis G.E."/>
        </authorList>
    </citation>
    <scope>NUCLEOTIDE SEQUENCE [MRNA] (ISOFORM 2)</scope>
    <scope>FUNCTION</scope>
    <scope>SUBCELLULAR LOCATION</scope>
    <scope>VARIANT PRO-357</scope>
</reference>
<reference key="2">
    <citation type="journal article" date="2003" name="Proc. Natl. Acad. Sci. U.S.A.">
        <title>Human capillary morphogenesis protein 2 functions as an anthrax toxin receptor.</title>
        <authorList>
            <person name="Scobie H.M."/>
            <person name="Rainey G.J.A."/>
            <person name="Bradley K.A."/>
            <person name="Young J.A.T."/>
        </authorList>
    </citation>
    <scope>NUCLEOTIDE SEQUENCE [MRNA] (ISOFORM 1)</scope>
    <scope>FUNCTION (MICROBIAL INFECTION)</scope>
    <scope>SUBCELLULAR LOCATION</scope>
    <scope>INTERACTION WITH ANTHRAX TOXIN PA (MICROBIAL INFECTION)</scope>
    <scope>VARIANT PRO-357</scope>
    <source>
        <tissue>Placenta</tissue>
    </source>
</reference>
<reference key="3">
    <citation type="journal article" date="2004" name="Nat. Genet.">
        <title>Complete sequencing and characterization of 21,243 full-length human cDNAs.</title>
        <authorList>
            <person name="Ota T."/>
            <person name="Suzuki Y."/>
            <person name="Nishikawa T."/>
            <person name="Otsuki T."/>
            <person name="Sugiyama T."/>
            <person name="Irie R."/>
            <person name="Wakamatsu A."/>
            <person name="Hayashi K."/>
            <person name="Sato H."/>
            <person name="Nagai K."/>
            <person name="Kimura K."/>
            <person name="Makita H."/>
            <person name="Sekine M."/>
            <person name="Obayashi M."/>
            <person name="Nishi T."/>
            <person name="Shibahara T."/>
            <person name="Tanaka T."/>
            <person name="Ishii S."/>
            <person name="Yamamoto J."/>
            <person name="Saito K."/>
            <person name="Kawai Y."/>
            <person name="Isono Y."/>
            <person name="Nakamura Y."/>
            <person name="Nagahari K."/>
            <person name="Murakami K."/>
            <person name="Yasuda T."/>
            <person name="Iwayanagi T."/>
            <person name="Wagatsuma M."/>
            <person name="Shiratori A."/>
            <person name="Sudo H."/>
            <person name="Hosoiri T."/>
            <person name="Kaku Y."/>
            <person name="Kodaira H."/>
            <person name="Kondo H."/>
            <person name="Sugawara M."/>
            <person name="Takahashi M."/>
            <person name="Kanda K."/>
            <person name="Yokoi T."/>
            <person name="Furuya T."/>
            <person name="Kikkawa E."/>
            <person name="Omura Y."/>
            <person name="Abe K."/>
            <person name="Kamihara K."/>
            <person name="Katsuta N."/>
            <person name="Sato K."/>
            <person name="Tanikawa M."/>
            <person name="Yamazaki M."/>
            <person name="Ninomiya K."/>
            <person name="Ishibashi T."/>
            <person name="Yamashita H."/>
            <person name="Murakawa K."/>
            <person name="Fujimori K."/>
            <person name="Tanai H."/>
            <person name="Kimata M."/>
            <person name="Watanabe M."/>
            <person name="Hiraoka S."/>
            <person name="Chiba Y."/>
            <person name="Ishida S."/>
            <person name="Ono Y."/>
            <person name="Takiguchi S."/>
            <person name="Watanabe S."/>
            <person name="Yosida M."/>
            <person name="Hotuta T."/>
            <person name="Kusano J."/>
            <person name="Kanehori K."/>
            <person name="Takahashi-Fujii A."/>
            <person name="Hara H."/>
            <person name="Tanase T.-O."/>
            <person name="Nomura Y."/>
            <person name="Togiya S."/>
            <person name="Komai F."/>
            <person name="Hara R."/>
            <person name="Takeuchi K."/>
            <person name="Arita M."/>
            <person name="Imose N."/>
            <person name="Musashino K."/>
            <person name="Yuuki H."/>
            <person name="Oshima A."/>
            <person name="Sasaki N."/>
            <person name="Aotsuka S."/>
            <person name="Yoshikawa Y."/>
            <person name="Matsunawa H."/>
            <person name="Ichihara T."/>
            <person name="Shiohata N."/>
            <person name="Sano S."/>
            <person name="Moriya S."/>
            <person name="Momiyama H."/>
            <person name="Satoh N."/>
            <person name="Takami S."/>
            <person name="Terashima Y."/>
            <person name="Suzuki O."/>
            <person name="Nakagawa S."/>
            <person name="Senoh A."/>
            <person name="Mizoguchi H."/>
            <person name="Goto Y."/>
            <person name="Shimizu F."/>
            <person name="Wakebe H."/>
            <person name="Hishigaki H."/>
            <person name="Watanabe T."/>
            <person name="Sugiyama A."/>
            <person name="Takemoto M."/>
            <person name="Kawakami B."/>
            <person name="Yamazaki M."/>
            <person name="Watanabe K."/>
            <person name="Kumagai A."/>
            <person name="Itakura S."/>
            <person name="Fukuzumi Y."/>
            <person name="Fujimori Y."/>
            <person name="Komiyama M."/>
            <person name="Tashiro H."/>
            <person name="Tanigami A."/>
            <person name="Fujiwara T."/>
            <person name="Ono T."/>
            <person name="Yamada K."/>
            <person name="Fujii Y."/>
            <person name="Ozaki K."/>
            <person name="Hirao M."/>
            <person name="Ohmori Y."/>
            <person name="Kawabata A."/>
            <person name="Hikiji T."/>
            <person name="Kobatake N."/>
            <person name="Inagaki H."/>
            <person name="Ikema Y."/>
            <person name="Okamoto S."/>
            <person name="Okitani R."/>
            <person name="Kawakami T."/>
            <person name="Noguchi S."/>
            <person name="Itoh T."/>
            <person name="Shigeta K."/>
            <person name="Senba T."/>
            <person name="Matsumura K."/>
            <person name="Nakajima Y."/>
            <person name="Mizuno T."/>
            <person name="Morinaga M."/>
            <person name="Sasaki M."/>
            <person name="Togashi T."/>
            <person name="Oyama M."/>
            <person name="Hata H."/>
            <person name="Watanabe M."/>
            <person name="Komatsu T."/>
            <person name="Mizushima-Sugano J."/>
            <person name="Satoh T."/>
            <person name="Shirai Y."/>
            <person name="Takahashi Y."/>
            <person name="Nakagawa K."/>
            <person name="Okumura K."/>
            <person name="Nagase T."/>
            <person name="Nomura N."/>
            <person name="Kikuchi H."/>
            <person name="Masuho Y."/>
            <person name="Yamashita R."/>
            <person name="Nakai K."/>
            <person name="Yada T."/>
            <person name="Nakamura Y."/>
            <person name="Ohara O."/>
            <person name="Isogai T."/>
            <person name="Sugano S."/>
        </authorList>
    </citation>
    <scope>NUCLEOTIDE SEQUENCE [LARGE SCALE MRNA] (ISOFORM 4)</scope>
    <scope>NUCLEOTIDE SEQUENCE [LARGE SCALE MRNA] OF 63-489 (ISOFORM 3)</scope>
    <source>
        <tissue>Synovial cell</tissue>
    </source>
</reference>
<reference key="4">
    <citation type="submission" date="2005-03" db="EMBL/GenBank/DDBJ databases">
        <authorList>
            <person name="Totoki Y."/>
            <person name="Toyoda A."/>
            <person name="Takeda T."/>
            <person name="Sakaki Y."/>
            <person name="Tanaka A."/>
            <person name="Yokoyama S."/>
            <person name="Ohara O."/>
            <person name="Nagase T."/>
            <person name="Kikuno R.F."/>
        </authorList>
    </citation>
    <scope>NUCLEOTIDE SEQUENCE [LARGE SCALE MRNA] (ISOFORM 4)</scope>
    <scope>VARIANT PRO-357</scope>
    <source>
        <tissue>Aortic endothelium</tissue>
    </source>
</reference>
<reference key="5">
    <citation type="journal article" date="2005" name="Nature">
        <title>Generation and annotation of the DNA sequences of human chromosomes 2 and 4.</title>
        <authorList>
            <person name="Hillier L.W."/>
            <person name="Graves T.A."/>
            <person name="Fulton R.S."/>
            <person name="Fulton L.A."/>
            <person name="Pepin K.H."/>
            <person name="Minx P."/>
            <person name="Wagner-McPherson C."/>
            <person name="Layman D."/>
            <person name="Wylie K."/>
            <person name="Sekhon M."/>
            <person name="Becker M.C."/>
            <person name="Fewell G.A."/>
            <person name="Delehaunty K.D."/>
            <person name="Miner T.L."/>
            <person name="Nash W.E."/>
            <person name="Kremitzki C."/>
            <person name="Oddy L."/>
            <person name="Du H."/>
            <person name="Sun H."/>
            <person name="Bradshaw-Cordum H."/>
            <person name="Ali J."/>
            <person name="Carter J."/>
            <person name="Cordes M."/>
            <person name="Harris A."/>
            <person name="Isak A."/>
            <person name="van Brunt A."/>
            <person name="Nguyen C."/>
            <person name="Du F."/>
            <person name="Courtney L."/>
            <person name="Kalicki J."/>
            <person name="Ozersky P."/>
            <person name="Abbott S."/>
            <person name="Armstrong J."/>
            <person name="Belter E.A."/>
            <person name="Caruso L."/>
            <person name="Cedroni M."/>
            <person name="Cotton M."/>
            <person name="Davidson T."/>
            <person name="Desai A."/>
            <person name="Elliott G."/>
            <person name="Erb T."/>
            <person name="Fronick C."/>
            <person name="Gaige T."/>
            <person name="Haakenson W."/>
            <person name="Haglund K."/>
            <person name="Holmes A."/>
            <person name="Harkins R."/>
            <person name="Kim K."/>
            <person name="Kruchowski S.S."/>
            <person name="Strong C.M."/>
            <person name="Grewal N."/>
            <person name="Goyea E."/>
            <person name="Hou S."/>
            <person name="Levy A."/>
            <person name="Martinka S."/>
            <person name="Mead K."/>
            <person name="McLellan M.D."/>
            <person name="Meyer R."/>
            <person name="Randall-Maher J."/>
            <person name="Tomlinson C."/>
            <person name="Dauphin-Kohlberg S."/>
            <person name="Kozlowicz-Reilly A."/>
            <person name="Shah N."/>
            <person name="Swearengen-Shahid S."/>
            <person name="Snider J."/>
            <person name="Strong J.T."/>
            <person name="Thompson J."/>
            <person name="Yoakum M."/>
            <person name="Leonard S."/>
            <person name="Pearman C."/>
            <person name="Trani L."/>
            <person name="Radionenko M."/>
            <person name="Waligorski J.E."/>
            <person name="Wang C."/>
            <person name="Rock S.M."/>
            <person name="Tin-Wollam A.-M."/>
            <person name="Maupin R."/>
            <person name="Latreille P."/>
            <person name="Wendl M.C."/>
            <person name="Yang S.-P."/>
            <person name="Pohl C."/>
            <person name="Wallis J.W."/>
            <person name="Spieth J."/>
            <person name="Bieri T.A."/>
            <person name="Berkowicz N."/>
            <person name="Nelson J.O."/>
            <person name="Osborne J."/>
            <person name="Ding L."/>
            <person name="Meyer R."/>
            <person name="Sabo A."/>
            <person name="Shotland Y."/>
            <person name="Sinha P."/>
            <person name="Wohldmann P.E."/>
            <person name="Cook L.L."/>
            <person name="Hickenbotham M.T."/>
            <person name="Eldred J."/>
            <person name="Williams D."/>
            <person name="Jones T.A."/>
            <person name="She X."/>
            <person name="Ciccarelli F.D."/>
            <person name="Izaurralde E."/>
            <person name="Taylor J."/>
            <person name="Schmutz J."/>
            <person name="Myers R.M."/>
            <person name="Cox D.R."/>
            <person name="Huang X."/>
            <person name="McPherson J.D."/>
            <person name="Mardis E.R."/>
            <person name="Clifton S.W."/>
            <person name="Warren W.C."/>
            <person name="Chinwalla A.T."/>
            <person name="Eddy S.R."/>
            <person name="Marra M.A."/>
            <person name="Ovcharenko I."/>
            <person name="Furey T.S."/>
            <person name="Miller W."/>
            <person name="Eichler E.E."/>
            <person name="Bork P."/>
            <person name="Suyama M."/>
            <person name="Torrents D."/>
            <person name="Waterston R.H."/>
            <person name="Wilson R.K."/>
        </authorList>
    </citation>
    <scope>NUCLEOTIDE SEQUENCE [LARGE SCALE GENOMIC DNA]</scope>
</reference>
<reference key="6">
    <citation type="journal article" date="2007" name="BMC Genomics">
        <title>The full-ORF clone resource of the German cDNA consortium.</title>
        <authorList>
            <person name="Bechtel S."/>
            <person name="Rosenfelder H."/>
            <person name="Duda A."/>
            <person name="Schmidt C.P."/>
            <person name="Ernst U."/>
            <person name="Wellenreuther R."/>
            <person name="Mehrle A."/>
            <person name="Schuster C."/>
            <person name="Bahr A."/>
            <person name="Bloecker H."/>
            <person name="Heubner D."/>
            <person name="Hoerlein A."/>
            <person name="Michel G."/>
            <person name="Wedler H."/>
            <person name="Koehrer K."/>
            <person name="Ottenwaelder B."/>
            <person name="Poustka A."/>
            <person name="Wiemann S."/>
            <person name="Schupp I."/>
        </authorList>
    </citation>
    <scope>NUCLEOTIDE SEQUENCE [LARGE SCALE MRNA] OF 137-489 (ISOFORM 4)</scope>
    <source>
        <tissue>Lymph node</tissue>
    </source>
</reference>
<reference key="7">
    <citation type="journal article" date="2004" name="Genome Res.">
        <title>The status, quality, and expansion of the NIH full-length cDNA project: the Mammalian Gene Collection (MGC).</title>
        <authorList>
            <consortium name="The MGC Project Team"/>
        </authorList>
    </citation>
    <scope>NUCLEOTIDE SEQUENCE [LARGE SCALE MRNA] OF 248-489 (ISOFORM 4)</scope>
    <scope>VARIANT PRO-357</scope>
    <source>
        <tissue>Brain</tissue>
    </source>
</reference>
<reference key="8">
    <citation type="journal article" date="2003" name="J. Cell Biol.">
        <title>Anthrax toxin triggers endocytosis of its receptor via a lipid raft-mediated clathrin-dependent process.</title>
        <authorList>
            <person name="Abrami L."/>
            <person name="Liu S."/>
            <person name="Cosson P."/>
            <person name="Leppla S.H."/>
            <person name="van der Goot F.G."/>
        </authorList>
    </citation>
    <scope>FUNCTION (MICROBIAL INFECTION)</scope>
    <scope>INTERACTION WITH ANTHRAX TOXIN PA (MICROBIAL INFECTION)</scope>
</reference>
<reference key="9">
    <citation type="journal article" date="2004" name="J. Cell Biol.">
        <title>Membrane insertion of anthrax protective antigen and cytoplasmic delivery of lethal factor occur at different stages of the endocytic pathway.</title>
        <authorList>
            <person name="Abrami L."/>
            <person name="Lindsay M."/>
            <person name="Parton R.G."/>
            <person name="Leppla S.H."/>
            <person name="van der Goot F.G."/>
        </authorList>
    </citation>
    <scope>FUNCTION (MICROBIAL INFECTION)</scope>
    <scope>INTERACTION WITH ANTHRAX TOXIN PA (MICROBIAL INFECTION)</scope>
</reference>
<reference key="10">
    <citation type="journal article" date="2009" name="Sci. Signal.">
        <title>Quantitative phosphoproteomic analysis of T cell receptor signaling reveals system-wide modulation of protein-protein interactions.</title>
        <authorList>
            <person name="Mayya V."/>
            <person name="Lundgren D.H."/>
            <person name="Hwang S.-I."/>
            <person name="Rezaul K."/>
            <person name="Wu L."/>
            <person name="Eng J.K."/>
            <person name="Rodionov V."/>
            <person name="Han D.K."/>
        </authorList>
    </citation>
    <scope>PHOSPHORYLATION [LARGE SCALE ANALYSIS] AT THR-147</scope>
    <scope>IDENTIFICATION BY MASS SPECTROMETRY [LARGE SCALE ANALYSIS]</scope>
    <source>
        <tissue>Leukemic T-cell</tissue>
    </source>
</reference>
<reference evidence="25" key="11">
    <citation type="journal article" date="2004" name="Nature">
        <title>Crystal structure of a complex between anthrax toxin and its host cell receptor.</title>
        <authorList>
            <person name="Santelli E."/>
            <person name="Bankston L.A."/>
            <person name="Leppla S.H."/>
            <person name="Liddington R.C."/>
        </authorList>
    </citation>
    <scope>X-RAY CRYSTALLOGRAPHY (2.5 ANGSTROMS) OF 40-212 IN COMPLEX WITH THE PROTECTIVE ANTIGEN OF BACILLUS ANTHRACIS AND MANGANESE</scope>
    <scope>FUNCTION (MICROBIAL INFECTION)</scope>
    <scope>INTERACTION WITH ANTHRAX TOXIN PA (MICROBIAL INFECTION)</scope>
</reference>
<reference evidence="23 24" key="12">
    <citation type="journal article" date="2004" name="Proc. Natl. Acad. Sci. U.S.A.">
        <title>Crystal structure of the von Willebrand factor A domain of human capillary morphogenesis protein 2: an anthrax toxin receptor.</title>
        <authorList>
            <person name="Lacy D.B."/>
            <person name="Wigelsworth D.J."/>
            <person name="Scobie H.M."/>
            <person name="Young J.A.T."/>
            <person name="Collier R.J."/>
        </authorList>
    </citation>
    <scope>X-RAY CRYSTALLOGRAPHY (1.5 ANGSTROMS) OF 38-217 IN COMPLEX WITH MAGNESIUM</scope>
    <scope>DISULFIDE BOND</scope>
</reference>
<reference key="13">
    <citation type="journal article" date="2004" name="Proc. Natl. Acad. Sci. U.S.A.">
        <title>Structure of heptameric protective antigen bound to an anthrax toxin receptor: a role for receptor in pH-dependent pore formation.</title>
        <authorList>
            <person name="Lacy D.B."/>
            <person name="Wigelsworth D.J."/>
            <person name="Melnyk R.A."/>
            <person name="Harrison S.C."/>
            <person name="Collier R.J."/>
        </authorList>
    </citation>
    <scope>X-RAY CRYSTALLOGRAPHY (3.6 ANGSTROMS) OF 38-218 OF COMPLEX WITH THE PROTECTIVE ANTIGEN OF BACILLUS ANTHRACIS</scope>
    <scope>FUNCTION (MICROBIAL INFECTION)</scope>
    <scope>INTERACTION WITH ANTHRAX TOXIN PA (MICROBIAL INFECTION)</scope>
</reference>
<reference key="14">
    <citation type="journal article" date="2003" name="Am. J. Hum. Genet.">
        <title>Mutations in the gene encoding capillary morphogenesis protein 2 cause juvenile hyaline fibromatosis and infantile systemic hyalinosis.</title>
        <authorList>
            <person name="Hanks S."/>
            <person name="Adams S."/>
            <person name="Douglas J."/>
            <person name="Arbour L."/>
            <person name="Atherton D.J."/>
            <person name="Balci S."/>
            <person name="Bode H."/>
            <person name="Campbell M.E."/>
            <person name="Feingold M."/>
            <person name="Keser G."/>
            <person name="Kleijer W."/>
            <person name="Mancini G."/>
            <person name="McGrath J.A."/>
            <person name="Muntoni F."/>
            <person name="Nanda A."/>
            <person name="Teare M.D."/>
            <person name="Warman M."/>
            <person name="Pope F.M."/>
            <person name="Superti-Furga A."/>
            <person name="Futreal P.A."/>
            <person name="Rahman N."/>
        </authorList>
    </citation>
    <scope>VARIANTS HFS PRO-45; THR-189; ARG-218; GLN-293 INS AND CYS-381</scope>
    <scope>VARIANT PRO-357</scope>
    <scope>TISSUE SPECIFICITY</scope>
</reference>
<reference key="15">
    <citation type="journal article" date="2003" name="Am. J. Hum. Genet.">
        <title>Mutations in capillary morphogenesis gene-2 result in the allelic disorders juvenile hyaline fibromatosis and infantile systemic hyalinosis.</title>
        <authorList>
            <person name="Dowling O."/>
            <person name="Difeo A."/>
            <person name="Ramirez M.C."/>
            <person name="Tukel T."/>
            <person name="Narla G."/>
            <person name="Bonafe L."/>
            <person name="Kayserili H."/>
            <person name="Yuksel-Apak M."/>
            <person name="Paller A.S."/>
            <person name="Norton K."/>
            <person name="Teebi A.S."/>
            <person name="Grum-Tokars V."/>
            <person name="Martin G.S."/>
            <person name="Davis G.E."/>
            <person name="Glucksman M.J."/>
            <person name="Martignetti J.A."/>
        </authorList>
    </citation>
    <scope>VARIANTS HFS ASP-105; THR-189 AND ARG-329</scope>
    <scope>FUNCTION</scope>
</reference>
<reference key="16">
    <citation type="journal article" date="2005" name="Clin. Exp. Dermatol.">
        <title>Capillary morphogenesis gene-2 mutation in infantile systemic hyalinosis: ultrastructural study and mutation analysis in a Taiwanese infant.</title>
        <authorList>
            <person name="Lee J.Y.-Y."/>
            <person name="Tsai Y.-M."/>
            <person name="Chao S.-C."/>
            <person name="Tu Y.-F."/>
        </authorList>
    </citation>
    <scope>INVOLVEMENT IN HFS</scope>
</reference>
<sequence>MVAERSPARSPGSWLFPGLWLLVLSGPGGLLRAQEQPSCRRAFDLYFVLDKSGSVANNWIEIYNFVQQLAERFVSPEMRLSFIVFSSQATIILPLTGDRGKISKGLEDLKRVSPVGETYIHEGLKLANEQIQKAGGLKTSSIIIALTDGKLDGLVPSYAEKEAKISRSLGASVYCVGVLDFEQAQLERIADSKEQVFPVKGGFQALKGIINSILAQSCTEILELQPSSVCVGEEFQIVLSGRGFMLGSRNGSVLCTYTVNETYTTSVKPVSVQLNSMLCPAPILNKAGETLDVSVSFNGGKSVISGSLIVTATECSNGIAAIIVILVLLLLLGIGLMWWFWPLCCKVVIKDPPPPPAPAPKEEEEEPLPTKKWPTVDASYYGGRGVGGIKRMEVRWGDKGSTEEGARLEKAKNAVVKIPEETEEPIRPRPPRPKPTHQPPQTKWYTPIKGRLDALWALLRRQYDRVSLMRPQEGDEVCIWECIEKELTA</sequence>
<dbReference type="EMBL" id="AY040326">
    <property type="protein sequence ID" value="AAK77222.1"/>
    <property type="molecule type" value="mRNA"/>
</dbReference>
<dbReference type="EMBL" id="AY233452">
    <property type="protein sequence ID" value="AAP04016.1"/>
    <property type="molecule type" value="mRNA"/>
</dbReference>
<dbReference type="EMBL" id="AK055636">
    <property type="protein sequence ID" value="BAB70976.1"/>
    <property type="status" value="ALT_INIT"/>
    <property type="molecule type" value="mRNA"/>
</dbReference>
<dbReference type="EMBL" id="AK091721">
    <property type="protein sequence ID" value="BAC03731.1"/>
    <property type="molecule type" value="mRNA"/>
</dbReference>
<dbReference type="EMBL" id="AB209913">
    <property type="protein sequence ID" value="BAD93150.1"/>
    <property type="status" value="ALT_INIT"/>
    <property type="molecule type" value="mRNA"/>
</dbReference>
<dbReference type="EMBL" id="AC097711">
    <property type="protein sequence ID" value="AAY40907.1"/>
    <property type="status" value="ALT_SEQ"/>
    <property type="molecule type" value="Genomic_DNA"/>
</dbReference>
<dbReference type="EMBL" id="AC109518">
    <property type="status" value="NOT_ANNOTATED_CDS"/>
    <property type="molecule type" value="Genomic_DNA"/>
</dbReference>
<dbReference type="EMBL" id="AC114773">
    <property type="status" value="NOT_ANNOTATED_CDS"/>
    <property type="molecule type" value="Genomic_DNA"/>
</dbReference>
<dbReference type="EMBL" id="AL832851">
    <property type="protein sequence ID" value="CAI46157.2"/>
    <property type="molecule type" value="mRNA"/>
</dbReference>
<dbReference type="EMBL" id="BC034001">
    <property type="protein sequence ID" value="AAH34001.2"/>
    <property type="molecule type" value="mRNA"/>
</dbReference>
<dbReference type="CCDS" id="CCDS47085.1">
    <molecule id="P58335-4"/>
</dbReference>
<dbReference type="CCDS" id="CCDS47086.1">
    <molecule id="P58335-1"/>
</dbReference>
<dbReference type="RefSeq" id="NP_001139266.1">
    <molecule id="P58335-1"/>
    <property type="nucleotide sequence ID" value="NM_001145794.2"/>
</dbReference>
<dbReference type="RefSeq" id="NP_001273709.1">
    <property type="nucleotide sequence ID" value="NM_001286780.1"/>
</dbReference>
<dbReference type="RefSeq" id="NP_001273710.1">
    <property type="nucleotide sequence ID" value="NM_001286781.1"/>
</dbReference>
<dbReference type="RefSeq" id="NP_477520.2">
    <molecule id="P58335-4"/>
    <property type="nucleotide sequence ID" value="NM_058172.6"/>
</dbReference>
<dbReference type="PDB" id="1SHT">
    <property type="method" value="X-ray"/>
    <property type="resolution" value="1.81 A"/>
    <property type="chains" value="X=38-217"/>
</dbReference>
<dbReference type="PDB" id="1SHU">
    <property type="method" value="X-ray"/>
    <property type="resolution" value="1.50 A"/>
    <property type="chains" value="X=38-218"/>
</dbReference>
<dbReference type="PDB" id="1T6B">
    <property type="method" value="X-ray"/>
    <property type="resolution" value="2.50 A"/>
    <property type="chains" value="Y=40-212"/>
</dbReference>
<dbReference type="PDB" id="1TZN">
    <property type="method" value="X-ray"/>
    <property type="resolution" value="4.30 A"/>
    <property type="chains" value="a/b/c/d/e/f/g/h/i/j/k/l/m/o=38-218"/>
</dbReference>
<dbReference type="PDB" id="7N1O">
    <property type="method" value="X-ray"/>
    <property type="resolution" value="2.77 A"/>
    <property type="chains" value="A=42-217"/>
</dbReference>
<dbReference type="PDB" id="8FT6">
    <property type="method" value="X-ray"/>
    <property type="resolution" value="2.62 A"/>
    <property type="chains" value="A=40-217"/>
</dbReference>
<dbReference type="PDB" id="8FT8">
    <property type="method" value="X-ray"/>
    <property type="resolution" value="1.60 A"/>
    <property type="chains" value="A=40-217"/>
</dbReference>
<dbReference type="PDB" id="8FZ4">
    <property type="method" value="X-ray"/>
    <property type="resolution" value="2.19 A"/>
    <property type="chains" value="A/B=37-217"/>
</dbReference>
<dbReference type="PDB" id="8FZU">
    <property type="method" value="X-ray"/>
    <property type="resolution" value="1.90 A"/>
    <property type="chains" value="A/B/C=39-217"/>
</dbReference>
<dbReference type="PDB" id="8FZV">
    <property type="method" value="X-ray"/>
    <property type="resolution" value="3.29 A"/>
    <property type="chains" value="A/B/C=40-217"/>
</dbReference>
<dbReference type="PDB" id="9DOC">
    <property type="method" value="X-ray"/>
    <property type="resolution" value="1.19 A"/>
    <property type="chains" value="A=44-217"/>
</dbReference>
<dbReference type="PDBsum" id="1SHT"/>
<dbReference type="PDBsum" id="1SHU"/>
<dbReference type="PDBsum" id="1T6B"/>
<dbReference type="PDBsum" id="1TZN"/>
<dbReference type="PDBsum" id="7N1O"/>
<dbReference type="PDBsum" id="8FT6"/>
<dbReference type="PDBsum" id="8FT8"/>
<dbReference type="PDBsum" id="8FZ4"/>
<dbReference type="PDBsum" id="8FZU"/>
<dbReference type="PDBsum" id="8FZV"/>
<dbReference type="PDBsum" id="9DOC"/>
<dbReference type="SMR" id="P58335"/>
<dbReference type="BioGRID" id="125602">
    <property type="interactions" value="27"/>
</dbReference>
<dbReference type="DIP" id="DIP-32476N"/>
<dbReference type="FunCoup" id="P58335">
    <property type="interactions" value="666"/>
</dbReference>
<dbReference type="IntAct" id="P58335">
    <property type="interactions" value="16"/>
</dbReference>
<dbReference type="MINT" id="P58335"/>
<dbReference type="STRING" id="9606.ENSP00000306185"/>
<dbReference type="BindingDB" id="P58335"/>
<dbReference type="ChEMBL" id="CHEMBL4296326"/>
<dbReference type="DrugBank" id="DB05945">
    <property type="generic name" value="MDX-1303"/>
</dbReference>
<dbReference type="GlyCosmos" id="P58335">
    <property type="glycosylation" value="2 sites, No reported glycans"/>
</dbReference>
<dbReference type="GlyGen" id="P58335">
    <property type="glycosylation" value="2 sites"/>
</dbReference>
<dbReference type="iPTMnet" id="P58335"/>
<dbReference type="PhosphoSitePlus" id="P58335"/>
<dbReference type="SwissPalm" id="P58335"/>
<dbReference type="BioMuta" id="ANTXR2"/>
<dbReference type="DMDM" id="306526289"/>
<dbReference type="jPOST" id="P58335"/>
<dbReference type="MassIVE" id="P58335"/>
<dbReference type="PaxDb" id="9606-ENSP00000306185"/>
<dbReference type="PeptideAtlas" id="P58335"/>
<dbReference type="ProteomicsDB" id="57060">
    <molecule id="P58335-1"/>
</dbReference>
<dbReference type="ProteomicsDB" id="57061">
    <molecule id="P58335-2"/>
</dbReference>
<dbReference type="ProteomicsDB" id="57062">
    <molecule id="P58335-3"/>
</dbReference>
<dbReference type="ProteomicsDB" id="57063">
    <molecule id="P58335-4"/>
</dbReference>
<dbReference type="Pumba" id="P58335"/>
<dbReference type="Antibodypedia" id="24968">
    <property type="antibodies" value="187 antibodies from 33 providers"/>
</dbReference>
<dbReference type="DNASU" id="118429"/>
<dbReference type="Ensembl" id="ENST00000307333.7">
    <molecule id="P58335-1"/>
    <property type="protein sequence ID" value="ENSP00000306185.6"/>
    <property type="gene ID" value="ENSG00000163297.18"/>
</dbReference>
<dbReference type="Ensembl" id="ENST00000346652.10">
    <molecule id="P58335-2"/>
    <property type="protein sequence ID" value="ENSP00000314883.6"/>
    <property type="gene ID" value="ENSG00000163297.18"/>
</dbReference>
<dbReference type="Ensembl" id="ENST00000403729.7">
    <molecule id="P58335-4"/>
    <property type="protein sequence ID" value="ENSP00000385575.2"/>
    <property type="gene ID" value="ENSG00000163297.18"/>
</dbReference>
<dbReference type="Ensembl" id="ENST00000681115.1">
    <molecule id="P58335-4"/>
    <property type="protein sequence ID" value="ENSP00000505618.1"/>
    <property type="gene ID" value="ENSG00000163297.18"/>
</dbReference>
<dbReference type="GeneID" id="118429"/>
<dbReference type="KEGG" id="hsa:118429"/>
<dbReference type="MANE-Select" id="ENST00000403729.7">
    <molecule id="P58335-4"/>
    <property type="protein sequence ID" value="ENSP00000385575.2"/>
    <property type="RefSeq nucleotide sequence ID" value="NM_058172.6"/>
    <property type="RefSeq protein sequence ID" value="NP_477520.2"/>
</dbReference>
<dbReference type="UCSC" id="uc003hly.5">
    <molecule id="P58335-1"/>
    <property type="organism name" value="human"/>
</dbReference>
<dbReference type="AGR" id="HGNC:21732"/>
<dbReference type="CTD" id="118429"/>
<dbReference type="DisGeNET" id="118429"/>
<dbReference type="GeneCards" id="ANTXR2"/>
<dbReference type="GeneReviews" id="ANTXR2"/>
<dbReference type="HGNC" id="HGNC:21732">
    <property type="gene designation" value="ANTXR2"/>
</dbReference>
<dbReference type="HPA" id="ENSG00000163297">
    <property type="expression patterns" value="Low tissue specificity"/>
</dbReference>
<dbReference type="MalaCards" id="ANTXR2"/>
<dbReference type="MIM" id="228600">
    <property type="type" value="phenotype"/>
</dbReference>
<dbReference type="MIM" id="608041">
    <property type="type" value="gene"/>
</dbReference>
<dbReference type="neXtProt" id="NX_P58335"/>
<dbReference type="OpenTargets" id="ENSG00000163297"/>
<dbReference type="Orphanet" id="2176">
    <property type="disease" value="Infantile systemic hyalinosis"/>
</dbReference>
<dbReference type="Orphanet" id="2028">
    <property type="disease" value="Juvenile hyaline fibromatosis"/>
</dbReference>
<dbReference type="PharmGKB" id="PA128394752"/>
<dbReference type="VEuPathDB" id="HostDB:ENSG00000163297"/>
<dbReference type="eggNOG" id="ENOG502QT7Y">
    <property type="taxonomic scope" value="Eukaryota"/>
</dbReference>
<dbReference type="GeneTree" id="ENSGT00940000156320"/>
<dbReference type="HOGENOM" id="CLU_029760_0_0_1"/>
<dbReference type="InParanoid" id="P58335"/>
<dbReference type="OMA" id="NFNRVPH"/>
<dbReference type="OrthoDB" id="10035766at2759"/>
<dbReference type="PAN-GO" id="P58335">
    <property type="GO annotations" value="4 GO annotations based on evolutionary models"/>
</dbReference>
<dbReference type="PhylomeDB" id="P58335"/>
<dbReference type="TreeFam" id="TF328943"/>
<dbReference type="PathwayCommons" id="P58335"/>
<dbReference type="Reactome" id="R-HSA-5210891">
    <property type="pathway name" value="Uptake and function of anthrax toxins"/>
</dbReference>
<dbReference type="SignaLink" id="P58335"/>
<dbReference type="BioGRID-ORCS" id="118429">
    <property type="hits" value="22 hits in 1163 CRISPR screens"/>
</dbReference>
<dbReference type="ChiTaRS" id="ANTXR2">
    <property type="organism name" value="human"/>
</dbReference>
<dbReference type="EvolutionaryTrace" id="P58335"/>
<dbReference type="GeneWiki" id="ANTXR2"/>
<dbReference type="GenomeRNAi" id="118429"/>
<dbReference type="Pharos" id="P58335">
    <property type="development level" value="Tchem"/>
</dbReference>
<dbReference type="PRO" id="PR:P58335"/>
<dbReference type="Proteomes" id="UP000005640">
    <property type="component" value="Chromosome 4"/>
</dbReference>
<dbReference type="RNAct" id="P58335">
    <property type="molecule type" value="protein"/>
</dbReference>
<dbReference type="Bgee" id="ENSG00000163297">
    <property type="expression patterns" value="Expressed in mucosa of stomach and 177 other cell types or tissues"/>
</dbReference>
<dbReference type="ExpressionAtlas" id="P58335">
    <property type="expression patterns" value="baseline and differential"/>
</dbReference>
<dbReference type="GO" id="GO:0009986">
    <property type="term" value="C:cell surface"/>
    <property type="evidence" value="ECO:0000318"/>
    <property type="project" value="GO_Central"/>
</dbReference>
<dbReference type="GO" id="GO:0005789">
    <property type="term" value="C:endoplasmic reticulum membrane"/>
    <property type="evidence" value="ECO:0007669"/>
    <property type="project" value="UniProtKB-SubCell"/>
</dbReference>
<dbReference type="GO" id="GO:0010008">
    <property type="term" value="C:endosome membrane"/>
    <property type="evidence" value="ECO:0000304"/>
    <property type="project" value="Reactome"/>
</dbReference>
<dbReference type="GO" id="GO:0009897">
    <property type="term" value="C:external side of plasma membrane"/>
    <property type="evidence" value="ECO:0007669"/>
    <property type="project" value="Ensembl"/>
</dbReference>
<dbReference type="GO" id="GO:0005576">
    <property type="term" value="C:extracellular region"/>
    <property type="evidence" value="ECO:0007669"/>
    <property type="project" value="UniProtKB-SubCell"/>
</dbReference>
<dbReference type="GO" id="GO:0005886">
    <property type="term" value="C:plasma membrane"/>
    <property type="evidence" value="ECO:0000318"/>
    <property type="project" value="GO_Central"/>
</dbReference>
<dbReference type="GO" id="GO:0046872">
    <property type="term" value="F:metal ion binding"/>
    <property type="evidence" value="ECO:0007669"/>
    <property type="project" value="UniProtKB-KW"/>
</dbReference>
<dbReference type="GO" id="GO:0004888">
    <property type="term" value="F:transmembrane signaling receptor activity"/>
    <property type="evidence" value="ECO:0000318"/>
    <property type="project" value="GO_Central"/>
</dbReference>
<dbReference type="GO" id="GO:0030199">
    <property type="term" value="P:collagen fibril organization"/>
    <property type="evidence" value="ECO:0007669"/>
    <property type="project" value="Ensembl"/>
</dbReference>
<dbReference type="GO" id="GO:0007338">
    <property type="term" value="P:single fertilization"/>
    <property type="evidence" value="ECO:0007669"/>
    <property type="project" value="Ensembl"/>
</dbReference>
<dbReference type="GO" id="GO:0060065">
    <property type="term" value="P:uterus development"/>
    <property type="evidence" value="ECO:0007669"/>
    <property type="project" value="Ensembl"/>
</dbReference>
<dbReference type="CDD" id="cd01474">
    <property type="entry name" value="vWA_ATR"/>
    <property type="match status" value="1"/>
</dbReference>
<dbReference type="FunFam" id="3.40.50.410:FF:000024">
    <property type="entry name" value="Anthrax toxin receptor"/>
    <property type="match status" value="1"/>
</dbReference>
<dbReference type="Gene3D" id="3.40.50.410">
    <property type="entry name" value="von Willebrand factor, type A domain"/>
    <property type="match status" value="1"/>
</dbReference>
<dbReference type="InterPro" id="IPR017360">
    <property type="entry name" value="Anthrax_toxin_rcpt"/>
</dbReference>
<dbReference type="InterPro" id="IPR008399">
    <property type="entry name" value="Anthrax_toxin_rcpt_C"/>
</dbReference>
<dbReference type="InterPro" id="IPR008400">
    <property type="entry name" value="Anthrax_toxin_rcpt_extracel"/>
</dbReference>
<dbReference type="InterPro" id="IPR002035">
    <property type="entry name" value="VWF_A"/>
</dbReference>
<dbReference type="InterPro" id="IPR036465">
    <property type="entry name" value="vWFA_dom_sf"/>
</dbReference>
<dbReference type="PANTHER" id="PTHR16059">
    <property type="entry name" value="ANTHRAX TOXIN RECEPTOR"/>
    <property type="match status" value="1"/>
</dbReference>
<dbReference type="PANTHER" id="PTHR16059:SF13">
    <property type="entry name" value="ANTHRAX TOXIN RECEPTOR 2"/>
    <property type="match status" value="1"/>
</dbReference>
<dbReference type="Pfam" id="PF05586">
    <property type="entry name" value="Ant_C"/>
    <property type="match status" value="1"/>
</dbReference>
<dbReference type="Pfam" id="PF05587">
    <property type="entry name" value="Anth_Ig"/>
    <property type="match status" value="1"/>
</dbReference>
<dbReference type="Pfam" id="PF00092">
    <property type="entry name" value="VWA"/>
    <property type="match status" value="1"/>
</dbReference>
<dbReference type="PIRSF" id="PIRSF038023">
    <property type="entry name" value="Anthrax_toxin_receptor_2"/>
    <property type="match status" value="1"/>
</dbReference>
<dbReference type="SMART" id="SM00327">
    <property type="entry name" value="VWA"/>
    <property type="match status" value="1"/>
</dbReference>
<dbReference type="SUPFAM" id="SSF53300">
    <property type="entry name" value="vWA-like"/>
    <property type="match status" value="1"/>
</dbReference>
<dbReference type="PROSITE" id="PS50234">
    <property type="entry name" value="VWFA"/>
    <property type="match status" value="1"/>
</dbReference>
<feature type="signal peptide" evidence="1">
    <location>
        <begin position="1"/>
        <end position="33"/>
    </location>
</feature>
<feature type="chain" id="PRO_0000002694" description="Anthrax toxin receptor 2">
    <location>
        <begin position="34"/>
        <end position="489"/>
    </location>
</feature>
<feature type="topological domain" description="Extracellular" evidence="1">
    <location>
        <begin position="34"/>
        <end position="318"/>
    </location>
</feature>
<feature type="transmembrane region" description="Helical" evidence="1">
    <location>
        <begin position="319"/>
        <end position="341"/>
    </location>
</feature>
<feature type="topological domain" description="Cytoplasmic" evidence="1">
    <location>
        <begin position="342"/>
        <end position="489"/>
    </location>
</feature>
<feature type="domain" description="VWFA" evidence="2">
    <location>
        <begin position="44"/>
        <end position="213"/>
    </location>
</feature>
<feature type="region of interest" description="Disordered" evidence="3">
    <location>
        <begin position="419"/>
        <end position="445"/>
    </location>
</feature>
<feature type="binding site" evidence="9 24 25">
    <location>
        <position position="52"/>
    </location>
    <ligand>
        <name>a divalent metal cation</name>
        <dbReference type="ChEBI" id="CHEBI:60240"/>
    </ligand>
</feature>
<feature type="binding site" evidence="9 24 25">
    <location>
        <position position="54"/>
    </location>
    <ligand>
        <name>a divalent metal cation</name>
        <dbReference type="ChEBI" id="CHEBI:60240"/>
    </ligand>
</feature>
<feature type="binding site" evidence="9 24 25">
    <location>
        <position position="118"/>
    </location>
    <ligand>
        <name>a divalent metal cation</name>
        <dbReference type="ChEBI" id="CHEBI:60240"/>
    </ligand>
</feature>
<feature type="modified residue" description="Phosphothreonine" evidence="26">
    <location>
        <position position="147"/>
    </location>
</feature>
<feature type="glycosylation site" description="N-linked (GlcNAc...) asparagine" evidence="1">
    <location>
        <position position="250"/>
    </location>
</feature>
<feature type="glycosylation site" description="N-linked (GlcNAc...) asparagine" evidence="1">
    <location>
        <position position="260"/>
    </location>
</feature>
<feature type="disulfide bond" evidence="9">
    <location>
        <begin position="39"/>
        <end position="218"/>
    </location>
</feature>
<feature type="splice variant" id="VSP_008343" description="In isoform 2." evidence="16">
    <location>
        <begin position="213"/>
        <end position="315"/>
    </location>
</feature>
<feature type="splice variant" id="VSP_008344" description="In isoform 3." evidence="17">
    <original>TLDVSVSFNGGKSVISGSLIVTATECSNGIAAI</original>
    <variation>WGLTVTQAGVKWHDLTHCTFGLSGSGDPPTSAS</variation>
    <location>
        <begin position="290"/>
        <end position="322"/>
    </location>
</feature>
<feature type="splice variant" id="VSP_008345" description="In isoform 3." evidence="17">
    <location>
        <begin position="323"/>
        <end position="489"/>
    </location>
</feature>
<feature type="splice variant" id="VSP_008346" description="In isoform 4." evidence="17 18 19 20">
    <original>VCIWECIEKELTA</original>
    <variation>GRCINFSRVPSQ</variation>
    <location>
        <begin position="477"/>
        <end position="489"/>
    </location>
</feature>
<feature type="sequence variant" id="VAR_022687" description="In HFS; infantile form; dbSNP:rs886041401." evidence="8">
    <original>L</original>
    <variation>P</variation>
    <location>
        <position position="45"/>
    </location>
</feature>
<feature type="sequence variant" id="VAR_022688" description="In HFS; dbSNP:rs137852902." evidence="7">
    <original>G</original>
    <variation>D</variation>
    <location>
        <position position="105"/>
    </location>
</feature>
<feature type="sequence variant" id="VAR_022689" description="In HFS; infantile form; dbSNP:rs137852905." evidence="7 8">
    <original>I</original>
    <variation>T</variation>
    <location>
        <position position="189"/>
    </location>
</feature>
<feature type="sequence variant" id="VAR_022690" description="In HFS; infantile form; dbSNP:rs781637328." evidence="8">
    <original>C</original>
    <variation>R</variation>
    <location>
        <position position="218"/>
    </location>
</feature>
<feature type="sequence variant" id="VAR_022691" description="In HFS." evidence="8">
    <original>V</original>
    <variation>VQ</variation>
    <location>
        <position position="293"/>
    </location>
</feature>
<feature type="sequence variant" id="VAR_022692" description="In HFS; dbSNP:rs137852903." evidence="7">
    <original>L</original>
    <variation>R</variation>
    <location>
        <position position="329"/>
    </location>
</feature>
<feature type="sequence variant" id="VAR_022693" description="In dbSNP:rs12647691." evidence="4 6 8 13 15">
    <original>A</original>
    <variation>P</variation>
    <location>
        <position position="357"/>
    </location>
</feature>
<feature type="sequence variant" id="VAR_022694" description="In HFS; dbSNP:rs137852901." evidence="8">
    <original>Y</original>
    <variation>C</variation>
    <location>
        <position position="381"/>
    </location>
</feature>
<feature type="strand" evidence="27">
    <location>
        <begin position="43"/>
        <end position="50"/>
    </location>
</feature>
<feature type="helix" evidence="27">
    <location>
        <begin position="53"/>
        <end position="58"/>
    </location>
</feature>
<feature type="helix" evidence="27">
    <location>
        <begin position="59"/>
        <end position="72"/>
    </location>
</feature>
<feature type="strand" evidence="27">
    <location>
        <begin position="78"/>
        <end position="96"/>
    </location>
</feature>
<feature type="helix" evidence="27">
    <location>
        <begin position="99"/>
        <end position="110"/>
    </location>
</feature>
<feature type="helix" evidence="27">
    <location>
        <begin position="120"/>
        <end position="134"/>
    </location>
</feature>
<feature type="helix" evidence="27">
    <location>
        <begin position="136"/>
        <end position="138"/>
    </location>
</feature>
<feature type="strand" evidence="27">
    <location>
        <begin position="141"/>
        <end position="147"/>
    </location>
</feature>
<feature type="helix" evidence="27">
    <location>
        <begin position="155"/>
        <end position="168"/>
    </location>
</feature>
<feature type="strand" evidence="27">
    <location>
        <begin position="172"/>
        <end position="177"/>
    </location>
</feature>
<feature type="helix" evidence="27">
    <location>
        <begin position="183"/>
        <end position="189"/>
    </location>
</feature>
<feature type="strand" evidence="27">
    <location>
        <begin position="190"/>
        <end position="192"/>
    </location>
</feature>
<feature type="helix" evidence="27">
    <location>
        <begin position="193"/>
        <end position="195"/>
    </location>
</feature>
<feature type="strand" evidence="27">
    <location>
        <begin position="196"/>
        <end position="201"/>
    </location>
</feature>
<feature type="helix" evidence="27">
    <location>
        <begin position="204"/>
        <end position="215"/>
    </location>
</feature>
<protein>
    <recommendedName>
        <fullName evidence="21">Anthrax toxin receptor 2</fullName>
    </recommendedName>
    <alternativeName>
        <fullName evidence="16">Capillary morphogenesis gene 2 protein</fullName>
        <shortName evidence="16">CMG-2</shortName>
    </alternativeName>
</protein>